<proteinExistence type="inferred from homology"/>
<comment type="function">
    <text evidence="1">Participates actively in the response to hyperosmotic and heat shock by preventing the aggregation of stress-denatured proteins and by disaggregating proteins, also in an autonomous, DnaK-independent fashion. Unfolded proteins bind initially to DnaJ; upon interaction with the DnaJ-bound protein, DnaK hydrolyzes its bound ATP, resulting in the formation of a stable complex. GrpE releases ADP from DnaK; ATP binding to DnaK triggers the release of the substrate protein, thus completing the reaction cycle. Several rounds of ATP-dependent interactions between DnaJ, DnaK and GrpE are required for fully efficient folding. Also involved, together with DnaK and GrpE, in the DNA replication of plasmids through activation of initiation proteins.</text>
</comment>
<comment type="cofactor">
    <cofactor evidence="1">
        <name>Zn(2+)</name>
        <dbReference type="ChEBI" id="CHEBI:29105"/>
    </cofactor>
    <text evidence="1">Binds 2 Zn(2+) ions per monomer.</text>
</comment>
<comment type="subunit">
    <text evidence="1">Homodimer.</text>
</comment>
<comment type="subcellular location">
    <subcellularLocation>
        <location evidence="1">Cytoplasm</location>
    </subcellularLocation>
</comment>
<comment type="domain">
    <text evidence="1">The J domain is necessary and sufficient to stimulate DnaK ATPase activity. Zinc center 1 plays an important role in the autonomous, DnaK-independent chaperone activity of DnaJ. Zinc center 2 is essential for interaction with DnaK and for DnaJ activity.</text>
</comment>
<comment type="similarity">
    <text evidence="1">Belongs to the DnaJ family.</text>
</comment>
<name>DNAJ_SHEB5</name>
<gene>
    <name evidence="1" type="primary">dnaJ</name>
    <name type="ordered locus">Sbal_3318</name>
</gene>
<organism>
    <name type="scientific">Shewanella baltica (strain OS155 / ATCC BAA-1091)</name>
    <dbReference type="NCBI Taxonomy" id="325240"/>
    <lineage>
        <taxon>Bacteria</taxon>
        <taxon>Pseudomonadati</taxon>
        <taxon>Pseudomonadota</taxon>
        <taxon>Gammaproteobacteria</taxon>
        <taxon>Alteromonadales</taxon>
        <taxon>Shewanellaceae</taxon>
        <taxon>Shewanella</taxon>
    </lineage>
</organism>
<reference key="1">
    <citation type="submission" date="2007-02" db="EMBL/GenBank/DDBJ databases">
        <title>Complete sequence of chromosome of Shewanella baltica OS155.</title>
        <authorList>
            <consortium name="US DOE Joint Genome Institute"/>
            <person name="Copeland A."/>
            <person name="Lucas S."/>
            <person name="Lapidus A."/>
            <person name="Barry K."/>
            <person name="Detter J.C."/>
            <person name="Glavina del Rio T."/>
            <person name="Hammon N."/>
            <person name="Israni S."/>
            <person name="Dalin E."/>
            <person name="Tice H."/>
            <person name="Pitluck S."/>
            <person name="Sims D.R."/>
            <person name="Brettin T."/>
            <person name="Bruce D."/>
            <person name="Han C."/>
            <person name="Tapia R."/>
            <person name="Brainard J."/>
            <person name="Schmutz J."/>
            <person name="Larimer F."/>
            <person name="Land M."/>
            <person name="Hauser L."/>
            <person name="Kyrpides N."/>
            <person name="Mikhailova N."/>
            <person name="Brettar I."/>
            <person name="Klappenbach J."/>
            <person name="Konstantinidis K."/>
            <person name="Rodrigues J."/>
            <person name="Tiedje J."/>
            <person name="Richardson P."/>
        </authorList>
    </citation>
    <scope>NUCLEOTIDE SEQUENCE [LARGE SCALE GENOMIC DNA]</scope>
    <source>
        <strain>OS155 / ATCC BAA-1091</strain>
    </source>
</reference>
<accession>A3D7T3</accession>
<evidence type="ECO:0000255" key="1">
    <source>
        <dbReference type="HAMAP-Rule" id="MF_01152"/>
    </source>
</evidence>
<protein>
    <recommendedName>
        <fullName evidence="1">Chaperone protein DnaJ</fullName>
    </recommendedName>
</protein>
<keyword id="KW-0143">Chaperone</keyword>
<keyword id="KW-0963">Cytoplasm</keyword>
<keyword id="KW-0235">DNA replication</keyword>
<keyword id="KW-0479">Metal-binding</keyword>
<keyword id="KW-1185">Reference proteome</keyword>
<keyword id="KW-0677">Repeat</keyword>
<keyword id="KW-0346">Stress response</keyword>
<keyword id="KW-0862">Zinc</keyword>
<keyword id="KW-0863">Zinc-finger</keyword>
<sequence>MSKRDYYEVLGVSRDTSEREIKKAYKRLAMKFHPDRNPGDKTAEANFKEIKEAYEILTDADKKAAYDQFGHAGVDPNRGGGGYGGGQGDFGDIFGDVFGDIFGGGRRGGQRQAARGSDLRYNLELSLEEAVKGLTKELRIPTLATCDLCEGSGAKKGTSATTCGTCHGQGQVQMRQGFFAVQQPCPTCHGRGKIIKDPCTKCHGDGRVEKSKTLSVKIPAGVDTGDRIRLAGEGEAGEFGAPAGDLYVQVSVREHAIFVRDGNNLYCEVPISFSKAALGGEIEVPTLDGKVSLKIPAETQTGRMFRLRGKGVKSVRSHAVGDLLCKVVMETPVNLNDRQKELLREFEATLTGESKKHSPKAEGFFDGVKKFFQDLNS</sequence>
<dbReference type="EMBL" id="CP000563">
    <property type="protein sequence ID" value="ABN62796.1"/>
    <property type="molecule type" value="Genomic_DNA"/>
</dbReference>
<dbReference type="RefSeq" id="WP_006082793.1">
    <property type="nucleotide sequence ID" value="NC_009052.1"/>
</dbReference>
<dbReference type="SMR" id="A3D7T3"/>
<dbReference type="STRING" id="325240.Sbal_3318"/>
<dbReference type="KEGG" id="sbl:Sbal_3318"/>
<dbReference type="HOGENOM" id="CLU_017633_0_7_6"/>
<dbReference type="OrthoDB" id="9779889at2"/>
<dbReference type="Proteomes" id="UP000001557">
    <property type="component" value="Chromosome"/>
</dbReference>
<dbReference type="GO" id="GO:0005737">
    <property type="term" value="C:cytoplasm"/>
    <property type="evidence" value="ECO:0007669"/>
    <property type="project" value="UniProtKB-SubCell"/>
</dbReference>
<dbReference type="GO" id="GO:0005524">
    <property type="term" value="F:ATP binding"/>
    <property type="evidence" value="ECO:0007669"/>
    <property type="project" value="InterPro"/>
</dbReference>
<dbReference type="GO" id="GO:0031072">
    <property type="term" value="F:heat shock protein binding"/>
    <property type="evidence" value="ECO:0007669"/>
    <property type="project" value="InterPro"/>
</dbReference>
<dbReference type="GO" id="GO:0051082">
    <property type="term" value="F:unfolded protein binding"/>
    <property type="evidence" value="ECO:0007669"/>
    <property type="project" value="UniProtKB-UniRule"/>
</dbReference>
<dbReference type="GO" id="GO:0008270">
    <property type="term" value="F:zinc ion binding"/>
    <property type="evidence" value="ECO:0007669"/>
    <property type="project" value="UniProtKB-UniRule"/>
</dbReference>
<dbReference type="GO" id="GO:0051085">
    <property type="term" value="P:chaperone cofactor-dependent protein refolding"/>
    <property type="evidence" value="ECO:0007669"/>
    <property type="project" value="TreeGrafter"/>
</dbReference>
<dbReference type="GO" id="GO:0006260">
    <property type="term" value="P:DNA replication"/>
    <property type="evidence" value="ECO:0007669"/>
    <property type="project" value="UniProtKB-KW"/>
</dbReference>
<dbReference type="GO" id="GO:0042026">
    <property type="term" value="P:protein refolding"/>
    <property type="evidence" value="ECO:0007669"/>
    <property type="project" value="TreeGrafter"/>
</dbReference>
<dbReference type="GO" id="GO:0009408">
    <property type="term" value="P:response to heat"/>
    <property type="evidence" value="ECO:0007669"/>
    <property type="project" value="InterPro"/>
</dbReference>
<dbReference type="CDD" id="cd06257">
    <property type="entry name" value="DnaJ"/>
    <property type="match status" value="1"/>
</dbReference>
<dbReference type="CDD" id="cd10747">
    <property type="entry name" value="DnaJ_C"/>
    <property type="match status" value="1"/>
</dbReference>
<dbReference type="CDD" id="cd10719">
    <property type="entry name" value="DnaJ_zf"/>
    <property type="match status" value="1"/>
</dbReference>
<dbReference type="FunFam" id="1.10.287.110:FF:000003">
    <property type="entry name" value="Molecular chaperone DnaJ"/>
    <property type="match status" value="1"/>
</dbReference>
<dbReference type="FunFam" id="2.10.230.10:FF:000002">
    <property type="entry name" value="Molecular chaperone DnaJ"/>
    <property type="match status" value="1"/>
</dbReference>
<dbReference type="FunFam" id="2.60.260.20:FF:000004">
    <property type="entry name" value="Molecular chaperone DnaJ"/>
    <property type="match status" value="1"/>
</dbReference>
<dbReference type="Gene3D" id="1.10.287.110">
    <property type="entry name" value="DnaJ domain"/>
    <property type="match status" value="1"/>
</dbReference>
<dbReference type="Gene3D" id="2.10.230.10">
    <property type="entry name" value="Heat shock protein DnaJ, cysteine-rich domain"/>
    <property type="match status" value="1"/>
</dbReference>
<dbReference type="Gene3D" id="2.60.260.20">
    <property type="entry name" value="Urease metallochaperone UreE, N-terminal domain"/>
    <property type="match status" value="2"/>
</dbReference>
<dbReference type="HAMAP" id="MF_01152">
    <property type="entry name" value="DnaJ"/>
    <property type="match status" value="1"/>
</dbReference>
<dbReference type="InterPro" id="IPR012724">
    <property type="entry name" value="DnaJ"/>
</dbReference>
<dbReference type="InterPro" id="IPR002939">
    <property type="entry name" value="DnaJ_C"/>
</dbReference>
<dbReference type="InterPro" id="IPR001623">
    <property type="entry name" value="DnaJ_domain"/>
</dbReference>
<dbReference type="InterPro" id="IPR018253">
    <property type="entry name" value="DnaJ_domain_CS"/>
</dbReference>
<dbReference type="InterPro" id="IPR008971">
    <property type="entry name" value="HSP40/DnaJ_pept-bd"/>
</dbReference>
<dbReference type="InterPro" id="IPR001305">
    <property type="entry name" value="HSP_DnaJ_Cys-rich_dom"/>
</dbReference>
<dbReference type="InterPro" id="IPR036410">
    <property type="entry name" value="HSP_DnaJ_Cys-rich_dom_sf"/>
</dbReference>
<dbReference type="InterPro" id="IPR036869">
    <property type="entry name" value="J_dom_sf"/>
</dbReference>
<dbReference type="NCBIfam" id="TIGR02349">
    <property type="entry name" value="DnaJ_bact"/>
    <property type="match status" value="1"/>
</dbReference>
<dbReference type="NCBIfam" id="NF008035">
    <property type="entry name" value="PRK10767.1"/>
    <property type="match status" value="1"/>
</dbReference>
<dbReference type="PANTHER" id="PTHR43096:SF48">
    <property type="entry name" value="CHAPERONE PROTEIN DNAJ"/>
    <property type="match status" value="1"/>
</dbReference>
<dbReference type="PANTHER" id="PTHR43096">
    <property type="entry name" value="DNAJ HOMOLOG 1, MITOCHONDRIAL-RELATED"/>
    <property type="match status" value="1"/>
</dbReference>
<dbReference type="Pfam" id="PF00226">
    <property type="entry name" value="DnaJ"/>
    <property type="match status" value="1"/>
</dbReference>
<dbReference type="Pfam" id="PF01556">
    <property type="entry name" value="DnaJ_C"/>
    <property type="match status" value="1"/>
</dbReference>
<dbReference type="Pfam" id="PF00684">
    <property type="entry name" value="DnaJ_CXXCXGXG"/>
    <property type="match status" value="1"/>
</dbReference>
<dbReference type="PRINTS" id="PR00625">
    <property type="entry name" value="JDOMAIN"/>
</dbReference>
<dbReference type="SMART" id="SM00271">
    <property type="entry name" value="DnaJ"/>
    <property type="match status" value="1"/>
</dbReference>
<dbReference type="SUPFAM" id="SSF46565">
    <property type="entry name" value="Chaperone J-domain"/>
    <property type="match status" value="1"/>
</dbReference>
<dbReference type="SUPFAM" id="SSF57938">
    <property type="entry name" value="DnaJ/Hsp40 cysteine-rich domain"/>
    <property type="match status" value="1"/>
</dbReference>
<dbReference type="SUPFAM" id="SSF49493">
    <property type="entry name" value="HSP40/DnaJ peptide-binding domain"/>
    <property type="match status" value="2"/>
</dbReference>
<dbReference type="PROSITE" id="PS00636">
    <property type="entry name" value="DNAJ_1"/>
    <property type="match status" value="1"/>
</dbReference>
<dbReference type="PROSITE" id="PS50076">
    <property type="entry name" value="DNAJ_2"/>
    <property type="match status" value="1"/>
</dbReference>
<dbReference type="PROSITE" id="PS51188">
    <property type="entry name" value="ZF_CR"/>
    <property type="match status" value="1"/>
</dbReference>
<feature type="chain" id="PRO_1000085287" description="Chaperone protein DnaJ">
    <location>
        <begin position="1"/>
        <end position="377"/>
    </location>
</feature>
<feature type="domain" description="J" evidence="1">
    <location>
        <begin position="5"/>
        <end position="70"/>
    </location>
</feature>
<feature type="repeat" description="CXXCXGXG motif">
    <location>
        <begin position="146"/>
        <end position="153"/>
    </location>
</feature>
<feature type="repeat" description="CXXCXGXG motif">
    <location>
        <begin position="163"/>
        <end position="170"/>
    </location>
</feature>
<feature type="repeat" description="CXXCXGXG motif">
    <location>
        <begin position="185"/>
        <end position="192"/>
    </location>
</feature>
<feature type="repeat" description="CXXCXGXG motif">
    <location>
        <begin position="199"/>
        <end position="206"/>
    </location>
</feature>
<feature type="zinc finger region" description="CR-type" evidence="1">
    <location>
        <begin position="133"/>
        <end position="211"/>
    </location>
</feature>
<feature type="binding site" evidence="1">
    <location>
        <position position="146"/>
    </location>
    <ligand>
        <name>Zn(2+)</name>
        <dbReference type="ChEBI" id="CHEBI:29105"/>
        <label>1</label>
    </ligand>
</feature>
<feature type="binding site" evidence="1">
    <location>
        <position position="149"/>
    </location>
    <ligand>
        <name>Zn(2+)</name>
        <dbReference type="ChEBI" id="CHEBI:29105"/>
        <label>1</label>
    </ligand>
</feature>
<feature type="binding site" evidence="1">
    <location>
        <position position="163"/>
    </location>
    <ligand>
        <name>Zn(2+)</name>
        <dbReference type="ChEBI" id="CHEBI:29105"/>
        <label>2</label>
    </ligand>
</feature>
<feature type="binding site" evidence="1">
    <location>
        <position position="166"/>
    </location>
    <ligand>
        <name>Zn(2+)</name>
        <dbReference type="ChEBI" id="CHEBI:29105"/>
        <label>2</label>
    </ligand>
</feature>
<feature type="binding site" evidence="1">
    <location>
        <position position="185"/>
    </location>
    <ligand>
        <name>Zn(2+)</name>
        <dbReference type="ChEBI" id="CHEBI:29105"/>
        <label>2</label>
    </ligand>
</feature>
<feature type="binding site" evidence="1">
    <location>
        <position position="188"/>
    </location>
    <ligand>
        <name>Zn(2+)</name>
        <dbReference type="ChEBI" id="CHEBI:29105"/>
        <label>2</label>
    </ligand>
</feature>
<feature type="binding site" evidence="1">
    <location>
        <position position="199"/>
    </location>
    <ligand>
        <name>Zn(2+)</name>
        <dbReference type="ChEBI" id="CHEBI:29105"/>
        <label>1</label>
    </ligand>
</feature>
<feature type="binding site" evidence="1">
    <location>
        <position position="202"/>
    </location>
    <ligand>
        <name>Zn(2+)</name>
        <dbReference type="ChEBI" id="CHEBI:29105"/>
        <label>1</label>
    </ligand>
</feature>